<proteinExistence type="evidence at protein level"/>
<organism>
    <name type="scientific">Nauphoeta cinerea</name>
    <name type="common">Cinereous cockroach</name>
    <name type="synonym">Gray cockroach</name>
    <dbReference type="NCBI Taxonomy" id="6990"/>
    <lineage>
        <taxon>Eukaryota</taxon>
        <taxon>Metazoa</taxon>
        <taxon>Ecdysozoa</taxon>
        <taxon>Arthropoda</taxon>
        <taxon>Hexapoda</taxon>
        <taxon>Insecta</taxon>
        <taxon>Pterygota</taxon>
        <taxon>Neoptera</taxon>
        <taxon>Polyneoptera</taxon>
        <taxon>Dictyoptera</taxon>
        <taxon>Blattodea</taxon>
        <taxon>Blaberoidea</taxon>
        <taxon>Blaberidae</taxon>
        <taxon>Oxyhaloinae</taxon>
        <taxon>Nauphoeta</taxon>
    </lineage>
</organism>
<comment type="function">
    <text evidence="1">Mediates visceral muscle contractile activity (myotropic activity).</text>
</comment>
<comment type="subcellular location">
    <subcellularLocation>
        <location>Secreted</location>
    </subcellularLocation>
</comment>
<comment type="mass spectrometry"/>
<comment type="similarity">
    <text evidence="2">Belongs to the periviscerokinin family.</text>
</comment>
<dbReference type="GO" id="GO:0005576">
    <property type="term" value="C:extracellular region"/>
    <property type="evidence" value="ECO:0007669"/>
    <property type="project" value="UniProtKB-SubCell"/>
</dbReference>
<dbReference type="GO" id="GO:0007218">
    <property type="term" value="P:neuropeptide signaling pathway"/>
    <property type="evidence" value="ECO:0007669"/>
    <property type="project" value="UniProtKB-KW"/>
</dbReference>
<dbReference type="InterPro" id="IPR013231">
    <property type="entry name" value="Periviscerokinin"/>
</dbReference>
<dbReference type="Pfam" id="PF08259">
    <property type="entry name" value="Periviscerokin"/>
    <property type="match status" value="1"/>
</dbReference>
<feature type="peptide" id="PRO_0000044265" description="Periviscerokinin-2">
    <location>
        <begin position="1"/>
        <end position="11"/>
    </location>
</feature>
<feature type="modified residue" description="Valine amide" evidence="1">
    <location>
        <position position="11"/>
    </location>
</feature>
<evidence type="ECO:0000269" key="1">
    <source>
    </source>
</evidence>
<evidence type="ECO:0000305" key="2"/>
<protein>
    <recommendedName>
        <fullName>Periviscerokinin-2</fullName>
        <shortName>PVK-2</shortName>
    </recommendedName>
</protein>
<reference key="1">
    <citation type="journal article" date="2000" name="Eur. J. Biochem.">
        <title>Identification of novel periviscerokinins from single neurohaemal release sites in insects. MS/MS fragmentation complemented by Edman degradation.</title>
        <authorList>
            <person name="Predel R."/>
            <person name="Kellner R."/>
            <person name="Baggerman G."/>
            <person name="Steinmetzer T."/>
            <person name="Schoofs L."/>
        </authorList>
    </citation>
    <scope>PROTEIN SEQUENCE</scope>
    <scope>FUNCTION</scope>
    <scope>MASS SPECTROMETRY</scope>
    <scope>AMIDATION AT VAL-11</scope>
    <source>
        <tissue>Abdominal perisympathetic organs</tissue>
    </source>
</reference>
<accession>P83927</accession>
<accession>P82699</accession>
<sequence>GSSGLISMPRV</sequence>
<name>PVK2_NAUCI</name>
<keyword id="KW-0027">Amidation</keyword>
<keyword id="KW-0903">Direct protein sequencing</keyword>
<keyword id="KW-0527">Neuropeptide</keyword>
<keyword id="KW-0964">Secreted</keyword>